<keyword id="KW-1185">Reference proteome</keyword>
<keyword id="KW-0687">Ribonucleoprotein</keyword>
<keyword id="KW-0689">Ribosomal protein</keyword>
<keyword id="KW-0694">RNA-binding</keyword>
<keyword id="KW-0699">rRNA-binding</keyword>
<evidence type="ECO:0000255" key="1">
    <source>
        <dbReference type="HAMAP-Rule" id="MF_01341"/>
    </source>
</evidence>
<evidence type="ECO:0000256" key="2">
    <source>
        <dbReference type="SAM" id="MobiDB-lite"/>
    </source>
</evidence>
<evidence type="ECO:0000305" key="3"/>
<protein>
    <recommendedName>
        <fullName evidence="1">Large ribosomal subunit protein uL15</fullName>
    </recommendedName>
    <alternativeName>
        <fullName evidence="3">50S ribosomal protein L15</fullName>
    </alternativeName>
</protein>
<name>RL15_THEVB</name>
<feature type="chain" id="PRO_0000104836" description="Large ribosomal subunit protein uL15">
    <location>
        <begin position="1"/>
        <end position="154"/>
    </location>
</feature>
<feature type="region of interest" description="Disordered" evidence="2">
    <location>
        <begin position="1"/>
        <end position="57"/>
    </location>
</feature>
<feature type="compositionally biased region" description="Gly residues" evidence="2">
    <location>
        <begin position="23"/>
        <end position="35"/>
    </location>
</feature>
<dbReference type="EMBL" id="BA000039">
    <property type="protein sequence ID" value="BAC07651.1"/>
    <property type="molecule type" value="Genomic_DNA"/>
</dbReference>
<dbReference type="RefSeq" id="NP_680889.1">
    <property type="nucleotide sequence ID" value="NC_004113.1"/>
</dbReference>
<dbReference type="RefSeq" id="WP_011055953.1">
    <property type="nucleotide sequence ID" value="NC_004113.1"/>
</dbReference>
<dbReference type="SMR" id="Q8DML6"/>
<dbReference type="STRING" id="197221.gene:10746676"/>
<dbReference type="EnsemblBacteria" id="BAC07651">
    <property type="protein sequence ID" value="BAC07651"/>
    <property type="gene ID" value="BAC07651"/>
</dbReference>
<dbReference type="KEGG" id="tel:tlr0098"/>
<dbReference type="PATRIC" id="fig|197221.4.peg.101"/>
<dbReference type="eggNOG" id="COG0200">
    <property type="taxonomic scope" value="Bacteria"/>
</dbReference>
<dbReference type="Proteomes" id="UP000000440">
    <property type="component" value="Chromosome"/>
</dbReference>
<dbReference type="GO" id="GO:0022625">
    <property type="term" value="C:cytosolic large ribosomal subunit"/>
    <property type="evidence" value="ECO:0007669"/>
    <property type="project" value="TreeGrafter"/>
</dbReference>
<dbReference type="GO" id="GO:0019843">
    <property type="term" value="F:rRNA binding"/>
    <property type="evidence" value="ECO:0007669"/>
    <property type="project" value="UniProtKB-UniRule"/>
</dbReference>
<dbReference type="GO" id="GO:0003735">
    <property type="term" value="F:structural constituent of ribosome"/>
    <property type="evidence" value="ECO:0007669"/>
    <property type="project" value="InterPro"/>
</dbReference>
<dbReference type="GO" id="GO:0006412">
    <property type="term" value="P:translation"/>
    <property type="evidence" value="ECO:0007669"/>
    <property type="project" value="UniProtKB-UniRule"/>
</dbReference>
<dbReference type="Gene3D" id="3.100.10.10">
    <property type="match status" value="1"/>
</dbReference>
<dbReference type="HAMAP" id="MF_01341">
    <property type="entry name" value="Ribosomal_uL15"/>
    <property type="match status" value="1"/>
</dbReference>
<dbReference type="InterPro" id="IPR030878">
    <property type="entry name" value="Ribosomal_uL15"/>
</dbReference>
<dbReference type="InterPro" id="IPR021131">
    <property type="entry name" value="Ribosomal_uL15/eL18"/>
</dbReference>
<dbReference type="InterPro" id="IPR036227">
    <property type="entry name" value="Ribosomal_uL15/eL18_sf"/>
</dbReference>
<dbReference type="InterPro" id="IPR005749">
    <property type="entry name" value="Ribosomal_uL15_bac-type"/>
</dbReference>
<dbReference type="InterPro" id="IPR001196">
    <property type="entry name" value="Ribosomal_uL15_CS"/>
</dbReference>
<dbReference type="NCBIfam" id="TIGR01071">
    <property type="entry name" value="rplO_bact"/>
    <property type="match status" value="1"/>
</dbReference>
<dbReference type="PANTHER" id="PTHR12934">
    <property type="entry name" value="50S RIBOSOMAL PROTEIN L15"/>
    <property type="match status" value="1"/>
</dbReference>
<dbReference type="PANTHER" id="PTHR12934:SF11">
    <property type="entry name" value="LARGE RIBOSOMAL SUBUNIT PROTEIN UL15M"/>
    <property type="match status" value="1"/>
</dbReference>
<dbReference type="Pfam" id="PF00828">
    <property type="entry name" value="Ribosomal_L27A"/>
    <property type="match status" value="1"/>
</dbReference>
<dbReference type="SUPFAM" id="SSF52080">
    <property type="entry name" value="Ribosomal proteins L15p and L18e"/>
    <property type="match status" value="1"/>
</dbReference>
<dbReference type="PROSITE" id="PS00475">
    <property type="entry name" value="RIBOSOMAL_L15"/>
    <property type="match status" value="1"/>
</dbReference>
<accession>Q8DML6</accession>
<comment type="function">
    <text evidence="1">Binds to the 23S rRNA.</text>
</comment>
<comment type="subunit">
    <text evidence="1">Part of the 50S ribosomal subunit.</text>
</comment>
<comment type="similarity">
    <text evidence="1">Belongs to the universal ribosomal protein uL15 family.</text>
</comment>
<gene>
    <name evidence="1" type="primary">rplO</name>
    <name type="synonym">rpl15</name>
    <name type="ordered locus">tlr0098</name>
</gene>
<proteinExistence type="inferred from homology"/>
<reference key="1">
    <citation type="journal article" date="2002" name="DNA Res.">
        <title>Complete genome structure of the thermophilic cyanobacterium Thermosynechococcus elongatus BP-1.</title>
        <authorList>
            <person name="Nakamura Y."/>
            <person name="Kaneko T."/>
            <person name="Sato S."/>
            <person name="Ikeuchi M."/>
            <person name="Katoh H."/>
            <person name="Sasamoto S."/>
            <person name="Watanabe A."/>
            <person name="Iriguchi M."/>
            <person name="Kawashima K."/>
            <person name="Kimura T."/>
            <person name="Kishida Y."/>
            <person name="Kiyokawa C."/>
            <person name="Kohara M."/>
            <person name="Matsumoto M."/>
            <person name="Matsuno A."/>
            <person name="Nakazaki N."/>
            <person name="Shimpo S."/>
            <person name="Sugimoto M."/>
            <person name="Takeuchi C."/>
            <person name="Yamada M."/>
            <person name="Tabata S."/>
        </authorList>
    </citation>
    <scope>NUCLEOTIDE SEQUENCE [LARGE SCALE GENOMIC DNA]</scope>
    <source>
        <strain>NIES-2133 / IAM M-273 / BP-1</strain>
    </source>
</reference>
<organism>
    <name type="scientific">Thermosynechococcus vestitus (strain NIES-2133 / IAM M-273 / BP-1)</name>
    <dbReference type="NCBI Taxonomy" id="197221"/>
    <lineage>
        <taxon>Bacteria</taxon>
        <taxon>Bacillati</taxon>
        <taxon>Cyanobacteriota</taxon>
        <taxon>Cyanophyceae</taxon>
        <taxon>Acaryochloridales</taxon>
        <taxon>Thermosynechococcaceae</taxon>
        <taxon>Thermosynechococcus</taxon>
    </lineage>
</organism>
<sequence length="154" mass="16480">MRFQDLHPQAGSRRRKRRIGRGIAAGQGASGGFGMRGQKSRSGRPTRPGFEGGQNPLYRRLPKLKHFPLVKRKVYTTINVGRLNTLPANSVVTVQSLLEAGILTTAKYPLKVLGDGELNVKLEVHAAAFSGSARSKIEAAGGVCVETSVAADSE</sequence>